<organism>
    <name type="scientific">Bos taurus</name>
    <name type="common">Bovine</name>
    <dbReference type="NCBI Taxonomy" id="9913"/>
    <lineage>
        <taxon>Eukaryota</taxon>
        <taxon>Metazoa</taxon>
        <taxon>Chordata</taxon>
        <taxon>Craniata</taxon>
        <taxon>Vertebrata</taxon>
        <taxon>Euteleostomi</taxon>
        <taxon>Mammalia</taxon>
        <taxon>Eutheria</taxon>
        <taxon>Laurasiatheria</taxon>
        <taxon>Artiodactyla</taxon>
        <taxon>Ruminantia</taxon>
        <taxon>Pecora</taxon>
        <taxon>Bovidae</taxon>
        <taxon>Bovinae</taxon>
        <taxon>Bos</taxon>
    </lineage>
</organism>
<comment type="function">
    <text evidence="3">Functions as a GTPase-activating protein for the small GTPases RHOA, RHOB, RHOC and CDC42, terminating their downstream signaling. This induces morphological changes and detachment through cytoskeletal reorganization, playing a critical role in biological processes such as cell migration and proliferation. Also functions in vivo as an activator of the phospholipase PLCD1. Active DLC1 increases cell migration velocity but reduces directionality (By similarity). Required for growth factor-induced epithelial cell migration; in resting cells, interacts with TNS3 while PTEN interacts with the p85 regulatory subunit of the PI3K kinase complex but growth factor stimulation induces phosphorylation of TNS3 and PTEN, causing them to change their binding preference so that PTEN interacts with DLC1 and TNS3 interacts with p85 (By similarity). The PTEN-DLC1 complex translocates to the posterior of migrating cells to activate RHOA while the TNS3-p85 complex translocates to the leading edge of migrating cells to promote RAC1 activation (By similarity).</text>
</comment>
<comment type="subunit">
    <text evidence="3">Interacts with EF1A1, facilitates EF1A1 distribution to the membrane periphery and ruffles upon growth factor stimulation and suppresses cell migration. Interacts with tensin TNS1 (via N-terminus); the interaction is decreased by phosphorylation of TNS1. Interacts with TNS3 and PTEN; in resting cells, interacts with TNS3 (via C2 tensin-type domain) but, following growth factor stimulation, TNS3 and PTEN are phosphorylated which leads to weakened interaction with TNS3 and enhanced interaction with PTEN. Interacts (via C-terminus) with tensin TNS4 (via SH2 domain); the interaction is independent of tyrosine phosphorylation of DLC1.</text>
</comment>
<comment type="subcellular location">
    <subcellularLocation>
        <location evidence="1">Cytoplasm</location>
    </subcellularLocation>
    <subcellularLocation>
        <location evidence="3">Cell junction</location>
        <location evidence="3">Focal adhesion</location>
    </subcellularLocation>
    <subcellularLocation>
        <location evidence="1">Membrane</location>
        <topology evidence="1">Peripheral membrane protein</topology>
    </subcellularLocation>
    <text evidence="1">Colocalizes with EF1A1 at actin-rich regions in the cell periphery.</text>
</comment>
<comment type="domain">
    <text evidence="1">The SAM domain mediates interaction with EF1A1, and functions as an autoinhibitory regulator of RhoGAP Activity.</text>
</comment>
<comment type="domain">
    <text evidence="1">The polybasic cluster is required for activation and mediates binding to phosphatidylinositol-4,5-bisphosphate (PI(4,5)P(2)) containing membranes.</text>
</comment>
<name>RHG07_BOVIN</name>
<feature type="chain" id="PRO_0000382027" description="Rho GTPase-activating protein 7">
    <location>
        <begin position="1"/>
        <end position="1112"/>
    </location>
</feature>
<feature type="domain" description="SAM">
    <location>
        <begin position="37"/>
        <end position="104"/>
    </location>
</feature>
<feature type="domain" description="Rho-GAP" evidence="4">
    <location>
        <begin position="662"/>
        <end position="868"/>
    </location>
</feature>
<feature type="domain" description="START" evidence="5">
    <location>
        <begin position="898"/>
        <end position="1105"/>
    </location>
</feature>
<feature type="region of interest" description="Disordered" evidence="6">
    <location>
        <begin position="146"/>
        <end position="203"/>
    </location>
</feature>
<feature type="region of interest" description="Focal adhesion-targeting (FAT)" evidence="1">
    <location>
        <begin position="296"/>
        <end position="468"/>
    </location>
</feature>
<feature type="region of interest" description="Disordered" evidence="6">
    <location>
        <begin position="318"/>
        <end position="350"/>
    </location>
</feature>
<feature type="region of interest" description="Disordered" evidence="6">
    <location>
        <begin position="405"/>
        <end position="459"/>
    </location>
</feature>
<feature type="region of interest" description="Disordered" evidence="6">
    <location>
        <begin position="512"/>
        <end position="574"/>
    </location>
</feature>
<feature type="region of interest" description="Polybasic cluster (PBR)" evidence="1">
    <location>
        <begin position="635"/>
        <end position="657"/>
    </location>
</feature>
<feature type="compositionally biased region" description="Polar residues" evidence="6">
    <location>
        <begin position="183"/>
        <end position="193"/>
    </location>
</feature>
<feature type="compositionally biased region" description="Low complexity" evidence="6">
    <location>
        <begin position="320"/>
        <end position="348"/>
    </location>
</feature>
<feature type="compositionally biased region" description="Low complexity" evidence="6">
    <location>
        <begin position="409"/>
        <end position="423"/>
    </location>
</feature>
<feature type="compositionally biased region" description="Basic and acidic residues" evidence="6">
    <location>
        <begin position="437"/>
        <end position="446"/>
    </location>
</feature>
<feature type="compositionally biased region" description="Polar residues" evidence="6">
    <location>
        <begin position="520"/>
        <end position="532"/>
    </location>
</feature>
<feature type="compositionally biased region" description="Basic and acidic residues" evidence="6">
    <location>
        <begin position="534"/>
        <end position="544"/>
    </location>
</feature>
<feature type="compositionally biased region" description="Polar residues" evidence="6">
    <location>
        <begin position="547"/>
        <end position="556"/>
    </location>
</feature>
<feature type="site" description="Arginine finger; crucial for GTP hydrolysis by stabilizing the transition state" evidence="4">
    <location>
        <position position="698"/>
    </location>
</feature>
<feature type="modified residue" description="Phosphoserine" evidence="3">
    <location>
        <position position="112"/>
    </location>
</feature>
<feature type="modified residue" description="Phosphoserine" evidence="3">
    <location>
        <position position="115"/>
    </location>
</feature>
<feature type="modified residue" description="Phosphoserine" evidence="2">
    <location>
        <position position="155"/>
    </location>
</feature>
<feature type="modified residue" description="Phosphoserine" evidence="3">
    <location>
        <position position="343"/>
    </location>
</feature>
<reference key="1">
    <citation type="submission" date="2007-08" db="EMBL/GenBank/DDBJ databases">
        <authorList>
            <consortium name="NIH - Mammalian Gene Collection (MGC) project"/>
        </authorList>
    </citation>
    <scope>NUCLEOTIDE SEQUENCE [LARGE SCALE MRNA]</scope>
    <source>
        <strain>Hereford</strain>
        <tissue>Hypothalamus</tissue>
    </source>
</reference>
<protein>
    <recommendedName>
        <fullName>Rho GTPase-activating protein 7</fullName>
    </recommendedName>
    <alternativeName>
        <fullName>Deleted in liver cancer 1 protein homolog</fullName>
        <shortName>DLC-1</shortName>
    </alternativeName>
    <alternativeName>
        <fullName>Rho-type GTPase-activating protein 7</fullName>
    </alternativeName>
    <alternativeName>
        <fullName>START domain-containing protein 12</fullName>
        <shortName>StARD12</shortName>
    </alternativeName>
    <alternativeName>
        <fullName>StAR-related lipid transfer protein 12</fullName>
    </alternativeName>
</protein>
<dbReference type="EMBL" id="BC151638">
    <property type="protein sequence ID" value="AAI51639.1"/>
    <property type="molecule type" value="mRNA"/>
</dbReference>
<dbReference type="RefSeq" id="NP_001095963.1">
    <property type="nucleotide sequence ID" value="NM_001102493.1"/>
</dbReference>
<dbReference type="SMR" id="A7E300"/>
<dbReference type="STRING" id="9913.ENSBTAP00000020668"/>
<dbReference type="PaxDb" id="9913-ENSBTAP00000020664"/>
<dbReference type="GeneID" id="511433"/>
<dbReference type="KEGG" id="bta:511433"/>
<dbReference type="CTD" id="10395"/>
<dbReference type="eggNOG" id="KOG2200">
    <property type="taxonomic scope" value="Eukaryota"/>
</dbReference>
<dbReference type="InParanoid" id="A7E300"/>
<dbReference type="OrthoDB" id="10003330at2759"/>
<dbReference type="Proteomes" id="UP000009136">
    <property type="component" value="Unplaced"/>
</dbReference>
<dbReference type="GO" id="GO:0005737">
    <property type="term" value="C:cytoplasm"/>
    <property type="evidence" value="ECO:0007669"/>
    <property type="project" value="UniProtKB-SubCell"/>
</dbReference>
<dbReference type="GO" id="GO:0005925">
    <property type="term" value="C:focal adhesion"/>
    <property type="evidence" value="ECO:0000318"/>
    <property type="project" value="GO_Central"/>
</dbReference>
<dbReference type="GO" id="GO:0045121">
    <property type="term" value="C:membrane raft"/>
    <property type="evidence" value="ECO:0000318"/>
    <property type="project" value="GO_Central"/>
</dbReference>
<dbReference type="GO" id="GO:0005096">
    <property type="term" value="F:GTPase activator activity"/>
    <property type="evidence" value="ECO:0000318"/>
    <property type="project" value="GO_Central"/>
</dbReference>
<dbReference type="GO" id="GO:0008289">
    <property type="term" value="F:lipid binding"/>
    <property type="evidence" value="ECO:0007669"/>
    <property type="project" value="InterPro"/>
</dbReference>
<dbReference type="GO" id="GO:0030036">
    <property type="term" value="P:actin cytoskeleton organization"/>
    <property type="evidence" value="ECO:0000318"/>
    <property type="project" value="GO_Central"/>
</dbReference>
<dbReference type="GO" id="GO:0035023">
    <property type="term" value="P:regulation of Rho protein signal transduction"/>
    <property type="evidence" value="ECO:0000318"/>
    <property type="project" value="GO_Central"/>
</dbReference>
<dbReference type="GO" id="GO:0007165">
    <property type="term" value="P:signal transduction"/>
    <property type="evidence" value="ECO:0007669"/>
    <property type="project" value="InterPro"/>
</dbReference>
<dbReference type="CDD" id="cd04375">
    <property type="entry name" value="RhoGAP_DLC1"/>
    <property type="match status" value="1"/>
</dbReference>
<dbReference type="CDD" id="cd08908">
    <property type="entry name" value="START_STARD12-like"/>
    <property type="match status" value="1"/>
</dbReference>
<dbReference type="FunFam" id="3.30.530.20:FF:000010">
    <property type="entry name" value="rho GTPase-activating protein 7 isoform X1"/>
    <property type="match status" value="1"/>
</dbReference>
<dbReference type="FunFam" id="1.10.555.10:FF:000007">
    <property type="entry name" value="rho GTPase-activating protein 7 isoform X2"/>
    <property type="match status" value="1"/>
</dbReference>
<dbReference type="FunFam" id="1.10.287.2070:FF:000001">
    <property type="entry name" value="StAR-related lipid transfer domain-containing 13"/>
    <property type="match status" value="1"/>
</dbReference>
<dbReference type="Gene3D" id="1.10.287.2070">
    <property type="match status" value="1"/>
</dbReference>
<dbReference type="Gene3D" id="3.30.530.20">
    <property type="match status" value="1"/>
</dbReference>
<dbReference type="Gene3D" id="1.10.555.10">
    <property type="entry name" value="Rho GTPase activation protein"/>
    <property type="match status" value="1"/>
</dbReference>
<dbReference type="InterPro" id="IPR008936">
    <property type="entry name" value="Rho_GTPase_activation_prot"/>
</dbReference>
<dbReference type="InterPro" id="IPR000198">
    <property type="entry name" value="RhoGAP_dom"/>
</dbReference>
<dbReference type="InterPro" id="IPR001660">
    <property type="entry name" value="SAM"/>
</dbReference>
<dbReference type="InterPro" id="IPR013761">
    <property type="entry name" value="SAM/pointed_sf"/>
</dbReference>
<dbReference type="InterPro" id="IPR023393">
    <property type="entry name" value="START-like_dom_sf"/>
</dbReference>
<dbReference type="InterPro" id="IPR002913">
    <property type="entry name" value="START_lipid-bd_dom"/>
</dbReference>
<dbReference type="PANTHER" id="PTHR12659:SF2">
    <property type="entry name" value="RHO GTPASE-ACTIVATING PROTEIN 7"/>
    <property type="match status" value="1"/>
</dbReference>
<dbReference type="PANTHER" id="PTHR12659">
    <property type="entry name" value="RHO-TYPE GTPASE ACTIVATING PROTEIN"/>
    <property type="match status" value="1"/>
</dbReference>
<dbReference type="Pfam" id="PF00620">
    <property type="entry name" value="RhoGAP"/>
    <property type="match status" value="1"/>
</dbReference>
<dbReference type="Pfam" id="PF07647">
    <property type="entry name" value="SAM_2"/>
    <property type="match status" value="1"/>
</dbReference>
<dbReference type="Pfam" id="PF01852">
    <property type="entry name" value="START"/>
    <property type="match status" value="1"/>
</dbReference>
<dbReference type="SMART" id="SM00324">
    <property type="entry name" value="RhoGAP"/>
    <property type="match status" value="1"/>
</dbReference>
<dbReference type="SMART" id="SM00234">
    <property type="entry name" value="START"/>
    <property type="match status" value="1"/>
</dbReference>
<dbReference type="SUPFAM" id="SSF55961">
    <property type="entry name" value="Bet v1-like"/>
    <property type="match status" value="1"/>
</dbReference>
<dbReference type="SUPFAM" id="SSF48350">
    <property type="entry name" value="GTPase activation domain, GAP"/>
    <property type="match status" value="1"/>
</dbReference>
<dbReference type="SUPFAM" id="SSF47769">
    <property type="entry name" value="SAM/Pointed domain"/>
    <property type="match status" value="1"/>
</dbReference>
<dbReference type="PROSITE" id="PS50238">
    <property type="entry name" value="RHOGAP"/>
    <property type="match status" value="1"/>
</dbReference>
<dbReference type="PROSITE" id="PS50848">
    <property type="entry name" value="START"/>
    <property type="match status" value="1"/>
</dbReference>
<keyword id="KW-0965">Cell junction</keyword>
<keyword id="KW-0963">Cytoplasm</keyword>
<keyword id="KW-0343">GTPase activation</keyword>
<keyword id="KW-0472">Membrane</keyword>
<keyword id="KW-0597">Phosphoprotein</keyword>
<keyword id="KW-1185">Reference proteome</keyword>
<keyword id="KW-0043">Tumor suppressor</keyword>
<evidence type="ECO:0000250" key="1"/>
<evidence type="ECO:0000250" key="2">
    <source>
        <dbReference type="UniProtKB" id="Q63744"/>
    </source>
</evidence>
<evidence type="ECO:0000250" key="3">
    <source>
        <dbReference type="UniProtKB" id="Q96QB1"/>
    </source>
</evidence>
<evidence type="ECO:0000255" key="4">
    <source>
        <dbReference type="PROSITE-ProRule" id="PRU00172"/>
    </source>
</evidence>
<evidence type="ECO:0000255" key="5">
    <source>
        <dbReference type="PROSITE-ProRule" id="PRU00197"/>
    </source>
</evidence>
<evidence type="ECO:0000256" key="6">
    <source>
        <dbReference type="SAM" id="MobiDB-lite"/>
    </source>
</evidence>
<gene>
    <name type="primary">DLC1</name>
    <name type="synonym">ARHGAP7</name>
    <name type="synonym">STARD12</name>
</gene>
<accession>A7E300</accession>
<proteinExistence type="evidence at transcript level"/>
<sequence length="1112" mass="125468">MARPLRAPLRRSFSDHIRDSTARALDVIWKNTRDRRLAEIEAKEACDWLRAAGFPQYAQLYEDLLFPIDISSVKREHDFLDRDAIEALCRRLNTLNKCAVMKLEISPHRKRSEDSDEDEPCAISGKWTFQRDSKRWSRLEEFDVFSPKQDPIPGSPDAVHLKSAPSHENMQTDLSDRQEVASVHSTGSLTTHAPQRGEAAPARTNSVLSVCSSGTFVGNDDSFCSLPSPKELSSFSFSMKGHEKAAKSKTHSLLKRMESLKLKGSHHSKHKAPSKLGLIISGPILQEGVDEEKLKQLNCVEISALNGNHINVPMVRKRSISSSTQTSSSSSQSETSSNVSTPSPVTRTRSLSACNKRGGMYLEGFDPFNQSTFNNVMEQNCKNRESYPEDTVFYIPEDHKPGTFPKALSNGSFSPSGNNSSVNWRTGSFHGPGHISLRRENSSPKELKRRNSSSSVSSRLSIYDNVPGSILYSSSGDLADLENEDIFPELDDILYHVKGMQRIVNQWSEKFSDEGDSDSALDSVSPCPSSPKQIHLDVDNDRATPSDLDSTGNSLNEPEEPSDIPERRDSGVGASLTRSNRHRLRWHSFQSSHRPSLNSVSLQINCQSVAQMNLLQKYSLLKLTALLEKYTPSNKHGFSWAVPKFMKRIKVPDYKDRNVFGVPLTVNVQRTGQPLPQSIQQAMRYLRNHCLDQVGLFRKSGVKSRIQALRQMNESTIDCVNYEGQSAYDVADMLKQYFRDLPEPLMTNKLSETFLQIYQYVPKDQRLQAIKAAIMLLPDENREVLQTLLYFLSDVTAAVKENQMTPTNLAVCLAPSLFHLNTLKRENSSPRVMQRKQSLGKPDQKDLNENLAATQGLAHMIAECKKLFQVPEEMSRCRNSYTEQELKPLTLEALGRLCNDDSADYQHFLQDCVDSLFKEVKEKFKGWVSYSTSEQAELSYKKVSEGPPLRLWRATIEVPATPEEILKRLLKEQHLWDVDLLDSKVIEILDSQTEIYQYVQNSMAPHPARDYVVLRTWRTNLPKGACALLLTSVDHDRAPVVGVRVNVLLARYLIEPCGSGKSKLTYMCRADLRGHMPEWYTKSFGHLCAAEVVKIRDSFSHQNTETKDTKSR</sequence>